<accession>B4RWY2</accession>
<accession>F2GD20</accession>
<comment type="function">
    <text evidence="1">Catalyzes the initial step of the lipid cycle reactions in the biosynthesis of the cell wall peptidoglycan: transfers peptidoglycan precursor phospho-MurNAc-pentapeptide from UDP-MurNAc-pentapeptide onto the lipid carrier undecaprenyl phosphate, yielding undecaprenyl-pyrophosphoryl-MurNAc-pentapeptide, known as lipid I.</text>
</comment>
<comment type="catalytic activity">
    <reaction evidence="1">
        <text>UDP-N-acetyl-alpha-D-muramoyl-L-alanyl-gamma-D-glutamyl-meso-2,6-diaminopimeloyl-D-alanyl-D-alanine + di-trans,octa-cis-undecaprenyl phosphate = di-trans,octa-cis-undecaprenyl diphospho-N-acetyl-alpha-D-muramoyl-L-alanyl-D-glutamyl-meso-2,6-diaminopimeloyl-D-alanyl-D-alanine + UMP</text>
        <dbReference type="Rhea" id="RHEA:28386"/>
        <dbReference type="ChEBI" id="CHEBI:57865"/>
        <dbReference type="ChEBI" id="CHEBI:60392"/>
        <dbReference type="ChEBI" id="CHEBI:61386"/>
        <dbReference type="ChEBI" id="CHEBI:61387"/>
        <dbReference type="EC" id="2.7.8.13"/>
    </reaction>
</comment>
<comment type="cofactor">
    <cofactor evidence="1">
        <name>Mg(2+)</name>
        <dbReference type="ChEBI" id="CHEBI:18420"/>
    </cofactor>
</comment>
<comment type="pathway">
    <text evidence="1">Cell wall biogenesis; peptidoglycan biosynthesis.</text>
</comment>
<comment type="subcellular location">
    <subcellularLocation>
        <location evidence="1">Cell inner membrane</location>
        <topology evidence="1">Multi-pass membrane protein</topology>
    </subcellularLocation>
</comment>
<comment type="similarity">
    <text evidence="1">Belongs to the glycosyltransferase 4 family. MraY subfamily.</text>
</comment>
<keyword id="KW-0131">Cell cycle</keyword>
<keyword id="KW-0132">Cell division</keyword>
<keyword id="KW-0997">Cell inner membrane</keyword>
<keyword id="KW-1003">Cell membrane</keyword>
<keyword id="KW-0133">Cell shape</keyword>
<keyword id="KW-0961">Cell wall biogenesis/degradation</keyword>
<keyword id="KW-0460">Magnesium</keyword>
<keyword id="KW-0472">Membrane</keyword>
<keyword id="KW-0479">Metal-binding</keyword>
<keyword id="KW-0573">Peptidoglycan synthesis</keyword>
<keyword id="KW-0808">Transferase</keyword>
<keyword id="KW-0812">Transmembrane</keyword>
<keyword id="KW-1133">Transmembrane helix</keyword>
<protein>
    <recommendedName>
        <fullName evidence="1">Phospho-N-acetylmuramoyl-pentapeptide-transferase</fullName>
        <ecNumber evidence="1">2.7.8.13</ecNumber>
    </recommendedName>
    <alternativeName>
        <fullName evidence="1">UDP-MurNAc-pentapeptide phosphotransferase</fullName>
    </alternativeName>
</protein>
<name>MRAY_ALTMD</name>
<feature type="chain" id="PRO_1000090587" description="Phospho-N-acetylmuramoyl-pentapeptide-transferase">
    <location>
        <begin position="1"/>
        <end position="360"/>
    </location>
</feature>
<feature type="transmembrane region" description="Helical" evidence="1">
    <location>
        <begin position="21"/>
        <end position="41"/>
    </location>
</feature>
<feature type="transmembrane region" description="Helical" evidence="1">
    <location>
        <begin position="73"/>
        <end position="93"/>
    </location>
</feature>
<feature type="transmembrane region" description="Helical" evidence="1">
    <location>
        <begin position="97"/>
        <end position="117"/>
    </location>
</feature>
<feature type="transmembrane region" description="Helical" evidence="1">
    <location>
        <begin position="134"/>
        <end position="154"/>
    </location>
</feature>
<feature type="transmembrane region" description="Helical" evidence="1">
    <location>
        <begin position="168"/>
        <end position="188"/>
    </location>
</feature>
<feature type="transmembrane region" description="Helical" evidence="1">
    <location>
        <begin position="199"/>
        <end position="219"/>
    </location>
</feature>
<feature type="transmembrane region" description="Helical" evidence="1">
    <location>
        <begin position="239"/>
        <end position="259"/>
    </location>
</feature>
<feature type="transmembrane region" description="Helical" evidence="1">
    <location>
        <begin position="263"/>
        <end position="283"/>
    </location>
</feature>
<feature type="transmembrane region" description="Helical" evidence="1">
    <location>
        <begin position="288"/>
        <end position="308"/>
    </location>
</feature>
<feature type="transmembrane region" description="Helical" evidence="1">
    <location>
        <begin position="338"/>
        <end position="358"/>
    </location>
</feature>
<evidence type="ECO:0000255" key="1">
    <source>
        <dbReference type="HAMAP-Rule" id="MF_00038"/>
    </source>
</evidence>
<gene>
    <name evidence="1" type="primary">mraY</name>
    <name type="ordered locus">MADE_1015165</name>
</gene>
<proteinExistence type="inferred from homology"/>
<sequence>MLIWLADWLTQFDSGFNVFSYLTLRAILSTLTALLIAILIGPKMIRYLQRMQIGQTVRDDGPQSHLSKSGTPTMGGLLILAAIVVSGLLWADLTNRYVLVTLTVVVAYGIIGFVDDYRKVIRKDSKGLIARWKYFWQSVVALGVAFYLYSSATMSAETSLLVPFFKEVFPQLGIFFIIITYFAIVGTSNAVNLTDGLDGLAIVPTILVAGAFAIFAYVTGNANFAEYLNIPHIPLTSELVIVCTAMVGAGLGFLWFNTYPAQVFMGDVGSLALGGTLGVLAVLVRQELVLIIMGGVFVMETLSVILQVGSYKLRGQRIFRMAPIHHHYELKGWPEPRVIVRFWIISIILVLVGLATLKLR</sequence>
<dbReference type="EC" id="2.7.8.13" evidence="1"/>
<dbReference type="EMBL" id="CP001103">
    <property type="protein sequence ID" value="AEA99167.1"/>
    <property type="molecule type" value="Genomic_DNA"/>
</dbReference>
<dbReference type="RefSeq" id="WP_012519459.1">
    <property type="nucleotide sequence ID" value="NC_011138.3"/>
</dbReference>
<dbReference type="SMR" id="B4RWY2"/>
<dbReference type="GeneID" id="56343320"/>
<dbReference type="KEGG" id="amc:MADE_1015165"/>
<dbReference type="HOGENOM" id="CLU_023982_0_0_6"/>
<dbReference type="UniPathway" id="UPA00219"/>
<dbReference type="Proteomes" id="UP000001870">
    <property type="component" value="Chromosome"/>
</dbReference>
<dbReference type="GO" id="GO:0005886">
    <property type="term" value="C:plasma membrane"/>
    <property type="evidence" value="ECO:0007669"/>
    <property type="project" value="UniProtKB-SubCell"/>
</dbReference>
<dbReference type="GO" id="GO:0046872">
    <property type="term" value="F:metal ion binding"/>
    <property type="evidence" value="ECO:0007669"/>
    <property type="project" value="UniProtKB-KW"/>
</dbReference>
<dbReference type="GO" id="GO:0008963">
    <property type="term" value="F:phospho-N-acetylmuramoyl-pentapeptide-transferase activity"/>
    <property type="evidence" value="ECO:0007669"/>
    <property type="project" value="UniProtKB-UniRule"/>
</dbReference>
<dbReference type="GO" id="GO:0051992">
    <property type="term" value="F:UDP-N-acetylmuramoyl-L-alanyl-D-glutamyl-meso-2,6-diaminopimelyl-D-alanyl-D-alanine:undecaprenyl-phosphate transferase activity"/>
    <property type="evidence" value="ECO:0007669"/>
    <property type="project" value="RHEA"/>
</dbReference>
<dbReference type="GO" id="GO:0051301">
    <property type="term" value="P:cell division"/>
    <property type="evidence" value="ECO:0007669"/>
    <property type="project" value="UniProtKB-KW"/>
</dbReference>
<dbReference type="GO" id="GO:0071555">
    <property type="term" value="P:cell wall organization"/>
    <property type="evidence" value="ECO:0007669"/>
    <property type="project" value="UniProtKB-KW"/>
</dbReference>
<dbReference type="GO" id="GO:0009252">
    <property type="term" value="P:peptidoglycan biosynthetic process"/>
    <property type="evidence" value="ECO:0007669"/>
    <property type="project" value="UniProtKB-UniRule"/>
</dbReference>
<dbReference type="GO" id="GO:0008360">
    <property type="term" value="P:regulation of cell shape"/>
    <property type="evidence" value="ECO:0007669"/>
    <property type="project" value="UniProtKB-KW"/>
</dbReference>
<dbReference type="CDD" id="cd06852">
    <property type="entry name" value="GT_MraY"/>
    <property type="match status" value="1"/>
</dbReference>
<dbReference type="HAMAP" id="MF_00038">
    <property type="entry name" value="MraY"/>
    <property type="match status" value="1"/>
</dbReference>
<dbReference type="InterPro" id="IPR000715">
    <property type="entry name" value="Glycosyl_transferase_4"/>
</dbReference>
<dbReference type="InterPro" id="IPR003524">
    <property type="entry name" value="PNAcMuramoyl-5peptid_Trfase"/>
</dbReference>
<dbReference type="InterPro" id="IPR018480">
    <property type="entry name" value="PNAcMuramoyl-5peptid_Trfase_CS"/>
</dbReference>
<dbReference type="NCBIfam" id="TIGR00445">
    <property type="entry name" value="mraY"/>
    <property type="match status" value="1"/>
</dbReference>
<dbReference type="PANTHER" id="PTHR22926">
    <property type="entry name" value="PHOSPHO-N-ACETYLMURAMOYL-PENTAPEPTIDE-TRANSFERASE"/>
    <property type="match status" value="1"/>
</dbReference>
<dbReference type="PANTHER" id="PTHR22926:SF5">
    <property type="entry name" value="PHOSPHO-N-ACETYLMURAMOYL-PENTAPEPTIDE-TRANSFERASE HOMOLOG"/>
    <property type="match status" value="1"/>
</dbReference>
<dbReference type="Pfam" id="PF00953">
    <property type="entry name" value="Glycos_transf_4"/>
    <property type="match status" value="1"/>
</dbReference>
<dbReference type="Pfam" id="PF10555">
    <property type="entry name" value="MraY_sig1"/>
    <property type="match status" value="1"/>
</dbReference>
<dbReference type="PROSITE" id="PS01347">
    <property type="entry name" value="MRAY_1"/>
    <property type="match status" value="1"/>
</dbReference>
<dbReference type="PROSITE" id="PS01348">
    <property type="entry name" value="MRAY_2"/>
    <property type="match status" value="1"/>
</dbReference>
<organism>
    <name type="scientific">Alteromonas mediterranea (strain DSM 17117 / CIP 110805 / LMG 28347 / Deep ecotype)</name>
    <dbReference type="NCBI Taxonomy" id="1774373"/>
    <lineage>
        <taxon>Bacteria</taxon>
        <taxon>Pseudomonadati</taxon>
        <taxon>Pseudomonadota</taxon>
        <taxon>Gammaproteobacteria</taxon>
        <taxon>Alteromonadales</taxon>
        <taxon>Alteromonadaceae</taxon>
        <taxon>Alteromonas/Salinimonas group</taxon>
        <taxon>Alteromonas</taxon>
    </lineage>
</organism>
<reference key="1">
    <citation type="journal article" date="2008" name="ISME J.">
        <title>Comparative genomics of two ecotypes of the marine planktonic copiotroph Alteromonas macleodii suggests alternative lifestyles associated with different kinds of particulate organic matter.</title>
        <authorList>
            <person name="Ivars-Martinez E."/>
            <person name="Martin-Cuadrado A.-B."/>
            <person name="D'Auria G."/>
            <person name="Mira A."/>
            <person name="Ferriera S."/>
            <person name="Johnson J."/>
            <person name="Friedman R."/>
            <person name="Rodriguez-Valera F."/>
        </authorList>
    </citation>
    <scope>NUCLEOTIDE SEQUENCE [LARGE SCALE GENOMIC DNA]</scope>
    <source>
        <strain>DSM 17117 / CIP 110805 / LMG 28347 / Deep ecotype</strain>
    </source>
</reference>